<evidence type="ECO:0000250" key="1"/>
<evidence type="ECO:0000305" key="2"/>
<comment type="function">
    <text evidence="1">Component of the Mediator complex, a coactivator involved in the regulated transcription of nearly all RNA polymerase II-dependent genes. Mediator functions as a bridge to convey information from gene-specific regulatory proteins to the basal RNA polymerase II transcription machinery. Mediator is recruited to promoters by direct interactions with regulatory proteins and serves as a scaffold for the assembly of a functional preinitiation complex with RNA polymerase II and the general transcription factors (By similarity).</text>
</comment>
<comment type="subunit">
    <text evidence="1">Component of the Mediator complex.</text>
</comment>
<comment type="subcellular location">
    <subcellularLocation>
        <location evidence="2">Nucleus</location>
    </subcellularLocation>
</comment>
<comment type="similarity">
    <text evidence="2">Belongs to the Mediator complex subunit 24 family.</text>
</comment>
<organism>
    <name type="scientific">Anopheles gambiae</name>
    <name type="common">African malaria mosquito</name>
    <dbReference type="NCBI Taxonomy" id="7165"/>
    <lineage>
        <taxon>Eukaryota</taxon>
        <taxon>Metazoa</taxon>
        <taxon>Ecdysozoa</taxon>
        <taxon>Arthropoda</taxon>
        <taxon>Hexapoda</taxon>
        <taxon>Insecta</taxon>
        <taxon>Pterygota</taxon>
        <taxon>Neoptera</taxon>
        <taxon>Endopterygota</taxon>
        <taxon>Diptera</taxon>
        <taxon>Nematocera</taxon>
        <taxon>Culicoidea</taxon>
        <taxon>Culicidae</taxon>
        <taxon>Anophelinae</taxon>
        <taxon>Anopheles</taxon>
    </lineage>
</organism>
<protein>
    <recommendedName>
        <fullName>Mediator of RNA polymerase II transcription subunit 24</fullName>
    </recommendedName>
    <alternativeName>
        <fullName>Mediator complex subunit 24</fullName>
    </alternativeName>
</protein>
<feature type="chain" id="PRO_0000305918" description="Mediator of RNA polymerase II transcription subunit 24">
    <location>
        <begin position="1"/>
        <end position="1036"/>
    </location>
</feature>
<gene>
    <name type="primary">MED24</name>
    <name type="ORF">AGAP005906</name>
</gene>
<reference key="1">
    <citation type="journal article" date="2002" name="Science">
        <title>The genome sequence of the malaria mosquito Anopheles gambiae.</title>
        <authorList>
            <person name="Holt R.A."/>
            <person name="Subramanian G.M."/>
            <person name="Halpern A."/>
            <person name="Sutton G.G."/>
            <person name="Charlab R."/>
            <person name="Nusskern D.R."/>
            <person name="Wincker P."/>
            <person name="Clark A.G."/>
            <person name="Ribeiro J.M.C."/>
            <person name="Wides R."/>
            <person name="Salzberg S.L."/>
            <person name="Loftus B.J."/>
            <person name="Yandell M.D."/>
            <person name="Majoros W.H."/>
            <person name="Rusch D.B."/>
            <person name="Lai Z."/>
            <person name="Kraft C.L."/>
            <person name="Abril J.F."/>
            <person name="Anthouard V."/>
            <person name="Arensburger P."/>
            <person name="Atkinson P.W."/>
            <person name="Baden H."/>
            <person name="de Berardinis V."/>
            <person name="Baldwin D."/>
            <person name="Benes V."/>
            <person name="Biedler J."/>
            <person name="Blass C."/>
            <person name="Bolanos R."/>
            <person name="Boscus D."/>
            <person name="Barnstead M."/>
            <person name="Cai S."/>
            <person name="Center A."/>
            <person name="Chaturverdi K."/>
            <person name="Christophides G.K."/>
            <person name="Chrystal M.A.M."/>
            <person name="Clamp M."/>
            <person name="Cravchik A."/>
            <person name="Curwen V."/>
            <person name="Dana A."/>
            <person name="Delcher A."/>
            <person name="Dew I."/>
            <person name="Evans C.A."/>
            <person name="Flanigan M."/>
            <person name="Grundschober-Freimoser A."/>
            <person name="Friedli L."/>
            <person name="Gu Z."/>
            <person name="Guan P."/>
            <person name="Guigo R."/>
            <person name="Hillenmeyer M.E."/>
            <person name="Hladun S.L."/>
            <person name="Hogan J.R."/>
            <person name="Hong Y.S."/>
            <person name="Hoover J."/>
            <person name="Jaillon O."/>
            <person name="Ke Z."/>
            <person name="Kodira C.D."/>
            <person name="Kokoza E."/>
            <person name="Koutsos A."/>
            <person name="Letunic I."/>
            <person name="Levitsky A.A."/>
            <person name="Liang Y."/>
            <person name="Lin J.-J."/>
            <person name="Lobo N.F."/>
            <person name="Lopez J.R."/>
            <person name="Malek J.A."/>
            <person name="McIntosh T.C."/>
            <person name="Meister S."/>
            <person name="Miller J.R."/>
            <person name="Mobarry C."/>
            <person name="Mongin E."/>
            <person name="Murphy S.D."/>
            <person name="O'Brochta D.A."/>
            <person name="Pfannkoch C."/>
            <person name="Qi R."/>
            <person name="Regier M.A."/>
            <person name="Remington K."/>
            <person name="Shao H."/>
            <person name="Sharakhova M.V."/>
            <person name="Sitter C.D."/>
            <person name="Shetty J."/>
            <person name="Smith T.J."/>
            <person name="Strong R."/>
            <person name="Sun J."/>
            <person name="Thomasova D."/>
            <person name="Ton L.Q."/>
            <person name="Topalis P."/>
            <person name="Tu Z.J."/>
            <person name="Unger M.F."/>
            <person name="Walenz B."/>
            <person name="Wang A.H."/>
            <person name="Wang J."/>
            <person name="Wang M."/>
            <person name="Wang X."/>
            <person name="Woodford K.J."/>
            <person name="Wortman J.R."/>
            <person name="Wu M."/>
            <person name="Yao A."/>
            <person name="Zdobnov E.M."/>
            <person name="Zhang H."/>
            <person name="Zhao Q."/>
            <person name="Zhao S."/>
            <person name="Zhu S.C."/>
            <person name="Zhimulev I."/>
            <person name="Coluzzi M."/>
            <person name="della Torre A."/>
            <person name="Roth C.W."/>
            <person name="Louis C."/>
            <person name="Kalush F."/>
            <person name="Mural R.J."/>
            <person name="Myers E.W."/>
            <person name="Adams M.D."/>
            <person name="Smith H.O."/>
            <person name="Broder S."/>
            <person name="Gardner M.J."/>
            <person name="Fraser C.M."/>
            <person name="Birney E."/>
            <person name="Bork P."/>
            <person name="Brey P.T."/>
            <person name="Venter J.C."/>
            <person name="Weissenbach J."/>
            <person name="Kafatos F.C."/>
            <person name="Collins F.H."/>
            <person name="Hoffman S.L."/>
        </authorList>
    </citation>
    <scope>NUCLEOTIDE SEQUENCE [LARGE SCALE GENOMIC DNA]</scope>
    <source>
        <strain>PEST</strain>
    </source>
</reference>
<keyword id="KW-0010">Activator</keyword>
<keyword id="KW-0547">Nucleotide-binding</keyword>
<keyword id="KW-0539">Nucleus</keyword>
<keyword id="KW-1185">Reference proteome</keyword>
<keyword id="KW-0677">Repeat</keyword>
<keyword id="KW-0804">Transcription</keyword>
<keyword id="KW-0805">Transcription regulation</keyword>
<name>MED24_ANOGA</name>
<accession>Q7Q6D9</accession>
<sequence>MIMDNSKTTSKTTLLKLMLLRAWKERWTDCQWGINVKTILTRGVSGDVYNLADAIIQQAVVGSGANMLFLSYLKHSLCAHLISHAAVLNRIAKYDQYDKHHCLIALLDFLKSIIDGVTCRGKQEEAILTKATVSLVHWLLQIYECVLQSYAEDSTLQPEEEEVVQRVAVVLERIVENPFLLGVLSIGKCDDPELFIALQKRFNGISNLTLTTGYVANVGAGNANSLTVTDCMRKLVLLEVDALEMRPFDGGKVEPITYSLQPLIAIEVLLNPMCDTHQYVAQLINLKRLKGFTYARLYCELMRGCLIALNNVEGTAKESLLCAFAFIKVPHILHQLHAKTNGAEQQDEATGATYSVEVLEAFELLLQDTPVLDYMDMKCACNVVECLLKEMVKLQLLTDTHVKQLVALREPVTAGLHKLDANSAPLTMMLKFVFRVESPLAGILKALSTDCSKVQDALLAMLCQVLTGNSLDLVLSVASVEGKFKAFISGLLKCNDYAKQATTAEIGKAPTTRSALFDVSFMILASIAQSYGSDVILAEGGNSFFEKWVRDYMVERKKTKSPMTMVKQADPMVLEELIMAMNNSEGMYVGLKASSLRWEDICYTIPALVHQVLMAWESESIAPLEIKKMLDGLKAYFSTFAVCAASWLCAYMQMVRQDEQLKPMNMVQQLCSALAGPLADEWQQQDYCKERFGLMGQIVRRMQQEFLRTPQVNPKLRALFPSQQQQHVVSHLPLEEQFEEAWKAIAERGWLPIETTFLLDTLLQSCGPAWLVEKLIGKLFVCKYVRDLNKTMDIIFAIMHLDIERCTIALLSQLVPMMLLNKAQTPDIVDPQSRVLAKLCVYCIIVTMETSLTATKKRTRGTASSELEDLDALCTSAKLRKIELDGMGVGCTEAATGGASGTEFSLDSALEPTASAWTTEAASIATLKEPLQSCLQTLFRTFAQHIATDELSPKVYFVFQFLSLLVESGRERIMCVLKLLPNGLVQSLLKINATDEMTVGLILRLYDLNTPSGRQFAMSDICLLRNIQMRKESIKL</sequence>
<proteinExistence type="inferred from homology"/>
<dbReference type="EMBL" id="AAAB01008960">
    <property type="protein sequence ID" value="EAA11905.4"/>
    <property type="molecule type" value="Genomic_DNA"/>
</dbReference>
<dbReference type="RefSeq" id="XP_315936.4">
    <property type="nucleotide sequence ID" value="XM_315936.4"/>
</dbReference>
<dbReference type="SMR" id="Q7Q6D9"/>
<dbReference type="FunCoup" id="Q7Q6D9">
    <property type="interactions" value="979"/>
</dbReference>
<dbReference type="STRING" id="7165.Q7Q6D9"/>
<dbReference type="PaxDb" id="7165-AGAP005906-PA"/>
<dbReference type="EnsemblMetazoa" id="AGAP005906-RA">
    <property type="protein sequence ID" value="AGAP005906-PA"/>
    <property type="gene ID" value="AGAP005906"/>
</dbReference>
<dbReference type="GeneID" id="1276573"/>
<dbReference type="KEGG" id="aga:1276573"/>
<dbReference type="CTD" id="9862"/>
<dbReference type="VEuPathDB" id="VectorBase:AGAMI1_012855"/>
<dbReference type="VEuPathDB" id="VectorBase:AGAP005906"/>
<dbReference type="eggNOG" id="ENOG502QPJD">
    <property type="taxonomic scope" value="Eukaryota"/>
</dbReference>
<dbReference type="HOGENOM" id="CLU_007484_0_0_1"/>
<dbReference type="InParanoid" id="Q7Q6D9"/>
<dbReference type="OMA" id="RWSDSQW"/>
<dbReference type="PhylomeDB" id="Q7Q6D9"/>
<dbReference type="Proteomes" id="UP000007062">
    <property type="component" value="Chromosome 2L"/>
</dbReference>
<dbReference type="GO" id="GO:0016592">
    <property type="term" value="C:mediator complex"/>
    <property type="evidence" value="ECO:0000318"/>
    <property type="project" value="GO_Central"/>
</dbReference>
<dbReference type="GO" id="GO:0000166">
    <property type="term" value="F:nucleotide binding"/>
    <property type="evidence" value="ECO:0007669"/>
    <property type="project" value="UniProtKB-KW"/>
</dbReference>
<dbReference type="GO" id="GO:0003712">
    <property type="term" value="F:transcription coregulator activity"/>
    <property type="evidence" value="ECO:0000318"/>
    <property type="project" value="GO_Central"/>
</dbReference>
<dbReference type="GO" id="GO:0060261">
    <property type="term" value="P:positive regulation of transcription initiation by RNA polymerase II"/>
    <property type="evidence" value="ECO:0000318"/>
    <property type="project" value="GO_Central"/>
</dbReference>
<dbReference type="InterPro" id="IPR021429">
    <property type="entry name" value="Mediator_Med24"/>
</dbReference>
<dbReference type="PANTHER" id="PTHR12898">
    <property type="entry name" value="MEDIATOR OF RNA POLYMERASE II TRANSCRIPTION SUBUNIT 24"/>
    <property type="match status" value="1"/>
</dbReference>
<dbReference type="PANTHER" id="PTHR12898:SF1">
    <property type="entry name" value="MEDIATOR OF RNA POLYMERASE II TRANSCRIPTION SUBUNIT 24"/>
    <property type="match status" value="1"/>
</dbReference>
<dbReference type="Pfam" id="PF11277">
    <property type="entry name" value="Med24_N"/>
    <property type="match status" value="1"/>
</dbReference>